<dbReference type="EMBL" id="CP000094">
    <property type="protein sequence ID" value="ABA76561.1"/>
    <property type="molecule type" value="Genomic_DNA"/>
</dbReference>
<dbReference type="RefSeq" id="WP_011335983.1">
    <property type="nucleotide sequence ID" value="NC_007492.2"/>
</dbReference>
<dbReference type="SMR" id="Q3K6P3"/>
<dbReference type="KEGG" id="pfo:Pfl01_4824"/>
<dbReference type="eggNOG" id="COG3024">
    <property type="taxonomic scope" value="Bacteria"/>
</dbReference>
<dbReference type="HOGENOM" id="CLU_178280_3_2_6"/>
<dbReference type="Proteomes" id="UP000002704">
    <property type="component" value="Chromosome"/>
</dbReference>
<dbReference type="GO" id="GO:0008657">
    <property type="term" value="F:DNA topoisomerase type II (double strand cut, ATP-hydrolyzing) inhibitor activity"/>
    <property type="evidence" value="ECO:0007669"/>
    <property type="project" value="UniProtKB-UniRule"/>
</dbReference>
<dbReference type="GO" id="GO:0008270">
    <property type="term" value="F:zinc ion binding"/>
    <property type="evidence" value="ECO:0007669"/>
    <property type="project" value="UniProtKB-UniRule"/>
</dbReference>
<dbReference type="GO" id="GO:0006355">
    <property type="term" value="P:regulation of DNA-templated transcription"/>
    <property type="evidence" value="ECO:0007669"/>
    <property type="project" value="InterPro"/>
</dbReference>
<dbReference type="Gene3D" id="3.30.50.10">
    <property type="entry name" value="Erythroid Transcription Factor GATA-1, subunit A"/>
    <property type="match status" value="1"/>
</dbReference>
<dbReference type="HAMAP" id="MF_00649">
    <property type="entry name" value="DNA_gyrase_inhibitor_YacG"/>
    <property type="match status" value="1"/>
</dbReference>
<dbReference type="InterPro" id="IPR005584">
    <property type="entry name" value="DNA_gyrase_inhibitor_YacG"/>
</dbReference>
<dbReference type="InterPro" id="IPR013088">
    <property type="entry name" value="Znf_NHR/GATA"/>
</dbReference>
<dbReference type="NCBIfam" id="NF001638">
    <property type="entry name" value="PRK00418.1"/>
    <property type="match status" value="1"/>
</dbReference>
<dbReference type="PANTHER" id="PTHR36150">
    <property type="entry name" value="DNA GYRASE INHIBITOR YACG"/>
    <property type="match status" value="1"/>
</dbReference>
<dbReference type="PANTHER" id="PTHR36150:SF1">
    <property type="entry name" value="DNA GYRASE INHIBITOR YACG"/>
    <property type="match status" value="1"/>
</dbReference>
<dbReference type="Pfam" id="PF03884">
    <property type="entry name" value="YacG"/>
    <property type="match status" value="1"/>
</dbReference>
<dbReference type="SUPFAM" id="SSF57716">
    <property type="entry name" value="Glucocorticoid receptor-like (DNA-binding domain)"/>
    <property type="match status" value="1"/>
</dbReference>
<gene>
    <name evidence="1" type="primary">yacG</name>
    <name type="ordered locus">Pfl01_4824</name>
</gene>
<protein>
    <recommendedName>
        <fullName evidence="1">DNA gyrase inhibitor YacG</fullName>
    </recommendedName>
</protein>
<evidence type="ECO:0000255" key="1">
    <source>
        <dbReference type="HAMAP-Rule" id="MF_00649"/>
    </source>
</evidence>
<organism>
    <name type="scientific">Pseudomonas fluorescens (strain Pf0-1)</name>
    <dbReference type="NCBI Taxonomy" id="205922"/>
    <lineage>
        <taxon>Bacteria</taxon>
        <taxon>Pseudomonadati</taxon>
        <taxon>Pseudomonadota</taxon>
        <taxon>Gammaproteobacteria</taxon>
        <taxon>Pseudomonadales</taxon>
        <taxon>Pseudomonadaceae</taxon>
        <taxon>Pseudomonas</taxon>
    </lineage>
</organism>
<feature type="chain" id="PRO_1000056985" description="DNA gyrase inhibitor YacG">
    <location>
        <begin position="1"/>
        <end position="66"/>
    </location>
</feature>
<feature type="binding site" evidence="1">
    <location>
        <position position="9"/>
    </location>
    <ligand>
        <name>Zn(2+)</name>
        <dbReference type="ChEBI" id="CHEBI:29105"/>
    </ligand>
</feature>
<feature type="binding site" evidence="1">
    <location>
        <position position="12"/>
    </location>
    <ligand>
        <name>Zn(2+)</name>
        <dbReference type="ChEBI" id="CHEBI:29105"/>
    </ligand>
</feature>
<feature type="binding site" evidence="1">
    <location>
        <position position="28"/>
    </location>
    <ligand>
        <name>Zn(2+)</name>
        <dbReference type="ChEBI" id="CHEBI:29105"/>
    </ligand>
</feature>
<feature type="binding site" evidence="1">
    <location>
        <position position="32"/>
    </location>
    <ligand>
        <name>Zn(2+)</name>
        <dbReference type="ChEBI" id="CHEBI:29105"/>
    </ligand>
</feature>
<comment type="function">
    <text evidence="1">Inhibits all the catalytic activities of DNA gyrase by preventing its interaction with DNA. Acts by binding directly to the C-terminal domain of GyrB, which probably disrupts DNA binding by the gyrase.</text>
</comment>
<comment type="cofactor">
    <cofactor evidence="1">
        <name>Zn(2+)</name>
        <dbReference type="ChEBI" id="CHEBI:29105"/>
    </cofactor>
    <text evidence="1">Binds 1 zinc ion.</text>
</comment>
<comment type="subunit">
    <text evidence="1">Interacts with GyrB.</text>
</comment>
<comment type="similarity">
    <text evidence="1">Belongs to the DNA gyrase inhibitor YacG family.</text>
</comment>
<name>YACG_PSEPF</name>
<keyword id="KW-0479">Metal-binding</keyword>
<keyword id="KW-0862">Zinc</keyword>
<reference key="1">
    <citation type="journal article" date="2009" name="Genome Biol.">
        <title>Genomic and genetic analyses of diversity and plant interactions of Pseudomonas fluorescens.</title>
        <authorList>
            <person name="Silby M.W."/>
            <person name="Cerdeno-Tarraga A.M."/>
            <person name="Vernikos G.S."/>
            <person name="Giddens S.R."/>
            <person name="Jackson R.W."/>
            <person name="Preston G.M."/>
            <person name="Zhang X.-X."/>
            <person name="Moon C.D."/>
            <person name="Gehrig S.M."/>
            <person name="Godfrey S.A.C."/>
            <person name="Knight C.G."/>
            <person name="Malone J.G."/>
            <person name="Robinson Z."/>
            <person name="Spiers A.J."/>
            <person name="Harris S."/>
            <person name="Challis G.L."/>
            <person name="Yaxley A.M."/>
            <person name="Harris D."/>
            <person name="Seeger K."/>
            <person name="Murphy L."/>
            <person name="Rutter S."/>
            <person name="Squares R."/>
            <person name="Quail M.A."/>
            <person name="Saunders E."/>
            <person name="Mavromatis K."/>
            <person name="Brettin T.S."/>
            <person name="Bentley S.D."/>
            <person name="Hothersall J."/>
            <person name="Stephens E."/>
            <person name="Thomas C.M."/>
            <person name="Parkhill J."/>
            <person name="Levy S.B."/>
            <person name="Rainey P.B."/>
            <person name="Thomson N.R."/>
        </authorList>
    </citation>
    <scope>NUCLEOTIDE SEQUENCE [LARGE SCALE GENOMIC DNA]</scope>
    <source>
        <strain>Pf0-1</strain>
    </source>
</reference>
<sequence>MSQTPTVNCPTCGAPVEFTPENKYRPFCSDRCKLIDLGAWASEEHKIPVAPDAEDELFSGDFDPRH</sequence>
<accession>Q3K6P3</accession>
<proteinExistence type="inferred from homology"/>